<sequence length="239" mass="27359">MTVEWLAEQLKEHNIQLTETQKQQFQTYYRLLVEWNEKMNLTSITDEHDVYLKHFYDSIAPSFYFDFNQPISICDVGAGAGFPSIPLKIMFPQLKVTIVDSLNKRIQFLNHLASELQLQDVSFIHDRAETFGKGVYRESYDVVTARAVARLSVLSELCLPLVKKGGQFVALKSSKGEEELEEAKFAISVLGGNVTETHTFELPEDAGERQMFIIDKKRQTPKKYPRKPGTPNKTPLLEK</sequence>
<comment type="function">
    <text evidence="1">Specifically methylates the N7 position of guanine in position 535 of 16S rRNA.</text>
</comment>
<comment type="subcellular location">
    <subcellularLocation>
        <location evidence="1">Cytoplasm</location>
    </subcellularLocation>
</comment>
<comment type="similarity">
    <text evidence="1">Belongs to the methyltransferase superfamily. RNA methyltransferase RsmG family.</text>
</comment>
<name>RSMG_STAAE</name>
<dbReference type="EC" id="2.1.1.-" evidence="1"/>
<dbReference type="EMBL" id="AP009351">
    <property type="protein sequence ID" value="BAF68882.1"/>
    <property type="molecule type" value="Genomic_DNA"/>
</dbReference>
<dbReference type="RefSeq" id="WP_000215595.1">
    <property type="nucleotide sequence ID" value="NZ_JBBIAE010000007.1"/>
</dbReference>
<dbReference type="SMR" id="A6QKK0"/>
<dbReference type="KEGG" id="sae:NWMN_2610"/>
<dbReference type="HOGENOM" id="CLU_065341_0_0_9"/>
<dbReference type="Proteomes" id="UP000006386">
    <property type="component" value="Chromosome"/>
</dbReference>
<dbReference type="GO" id="GO:0005829">
    <property type="term" value="C:cytosol"/>
    <property type="evidence" value="ECO:0007669"/>
    <property type="project" value="TreeGrafter"/>
</dbReference>
<dbReference type="GO" id="GO:0070043">
    <property type="term" value="F:rRNA (guanine-N7-)-methyltransferase activity"/>
    <property type="evidence" value="ECO:0007669"/>
    <property type="project" value="UniProtKB-UniRule"/>
</dbReference>
<dbReference type="CDD" id="cd02440">
    <property type="entry name" value="AdoMet_MTases"/>
    <property type="match status" value="1"/>
</dbReference>
<dbReference type="FunFam" id="3.40.50.150:FF:000041">
    <property type="entry name" value="Ribosomal RNA small subunit methyltransferase G"/>
    <property type="match status" value="1"/>
</dbReference>
<dbReference type="Gene3D" id="3.40.50.150">
    <property type="entry name" value="Vaccinia Virus protein VP39"/>
    <property type="match status" value="1"/>
</dbReference>
<dbReference type="HAMAP" id="MF_00074">
    <property type="entry name" value="16SrRNA_methyltr_G"/>
    <property type="match status" value="1"/>
</dbReference>
<dbReference type="InterPro" id="IPR003682">
    <property type="entry name" value="rRNA_ssu_MeTfrase_G"/>
</dbReference>
<dbReference type="InterPro" id="IPR029063">
    <property type="entry name" value="SAM-dependent_MTases_sf"/>
</dbReference>
<dbReference type="NCBIfam" id="TIGR00138">
    <property type="entry name" value="rsmG_gidB"/>
    <property type="match status" value="1"/>
</dbReference>
<dbReference type="PANTHER" id="PTHR31760">
    <property type="entry name" value="S-ADENOSYL-L-METHIONINE-DEPENDENT METHYLTRANSFERASES SUPERFAMILY PROTEIN"/>
    <property type="match status" value="1"/>
</dbReference>
<dbReference type="PANTHER" id="PTHR31760:SF0">
    <property type="entry name" value="S-ADENOSYL-L-METHIONINE-DEPENDENT METHYLTRANSFERASES SUPERFAMILY PROTEIN"/>
    <property type="match status" value="1"/>
</dbReference>
<dbReference type="Pfam" id="PF02527">
    <property type="entry name" value="GidB"/>
    <property type="match status" value="1"/>
</dbReference>
<dbReference type="PIRSF" id="PIRSF003078">
    <property type="entry name" value="GidB"/>
    <property type="match status" value="1"/>
</dbReference>
<dbReference type="SUPFAM" id="SSF53335">
    <property type="entry name" value="S-adenosyl-L-methionine-dependent methyltransferases"/>
    <property type="match status" value="1"/>
</dbReference>
<reference key="1">
    <citation type="journal article" date="2008" name="J. Bacteriol.">
        <title>Genome sequence of Staphylococcus aureus strain Newman and comparative analysis of staphylococcal genomes: polymorphism and evolution of two major pathogenicity islands.</title>
        <authorList>
            <person name="Baba T."/>
            <person name="Bae T."/>
            <person name="Schneewind O."/>
            <person name="Takeuchi F."/>
            <person name="Hiramatsu K."/>
        </authorList>
    </citation>
    <scope>NUCLEOTIDE SEQUENCE [LARGE SCALE GENOMIC DNA]</scope>
    <source>
        <strain>Newman</strain>
    </source>
</reference>
<keyword id="KW-0963">Cytoplasm</keyword>
<keyword id="KW-0489">Methyltransferase</keyword>
<keyword id="KW-0698">rRNA processing</keyword>
<keyword id="KW-0949">S-adenosyl-L-methionine</keyword>
<keyword id="KW-0808">Transferase</keyword>
<feature type="chain" id="PRO_1000071199" description="Ribosomal RNA small subunit methyltransferase G">
    <location>
        <begin position="1"/>
        <end position="239"/>
    </location>
</feature>
<feature type="region of interest" description="Disordered" evidence="2">
    <location>
        <begin position="215"/>
        <end position="239"/>
    </location>
</feature>
<feature type="binding site" evidence="1">
    <location>
        <position position="77"/>
    </location>
    <ligand>
        <name>S-adenosyl-L-methionine</name>
        <dbReference type="ChEBI" id="CHEBI:59789"/>
    </ligand>
</feature>
<feature type="binding site" evidence="1">
    <location>
        <position position="82"/>
    </location>
    <ligand>
        <name>S-adenosyl-L-methionine</name>
        <dbReference type="ChEBI" id="CHEBI:59789"/>
    </ligand>
</feature>
<feature type="binding site" evidence="1">
    <location>
        <begin position="128"/>
        <end position="129"/>
    </location>
    <ligand>
        <name>S-adenosyl-L-methionine</name>
        <dbReference type="ChEBI" id="CHEBI:59789"/>
    </ligand>
</feature>
<feature type="binding site" evidence="1">
    <location>
        <position position="146"/>
    </location>
    <ligand>
        <name>S-adenosyl-L-methionine</name>
        <dbReference type="ChEBI" id="CHEBI:59789"/>
    </ligand>
</feature>
<gene>
    <name evidence="1" type="primary">rsmG</name>
    <name type="ordered locus">NWMN_2610</name>
</gene>
<evidence type="ECO:0000255" key="1">
    <source>
        <dbReference type="HAMAP-Rule" id="MF_00074"/>
    </source>
</evidence>
<evidence type="ECO:0000256" key="2">
    <source>
        <dbReference type="SAM" id="MobiDB-lite"/>
    </source>
</evidence>
<proteinExistence type="inferred from homology"/>
<protein>
    <recommendedName>
        <fullName evidence="1">Ribosomal RNA small subunit methyltransferase G</fullName>
        <ecNumber evidence="1">2.1.1.-</ecNumber>
    </recommendedName>
    <alternativeName>
        <fullName evidence="1">16S rRNA 7-methylguanosine methyltransferase</fullName>
        <shortName evidence="1">16S rRNA m7G methyltransferase</shortName>
    </alternativeName>
</protein>
<accession>A6QKK0</accession>
<organism>
    <name type="scientific">Staphylococcus aureus (strain Newman)</name>
    <dbReference type="NCBI Taxonomy" id="426430"/>
    <lineage>
        <taxon>Bacteria</taxon>
        <taxon>Bacillati</taxon>
        <taxon>Bacillota</taxon>
        <taxon>Bacilli</taxon>
        <taxon>Bacillales</taxon>
        <taxon>Staphylococcaceae</taxon>
        <taxon>Staphylococcus</taxon>
    </lineage>
</organism>